<accession>Q3SF38</accession>
<protein>
    <recommendedName>
        <fullName evidence="1">Membrane protein insertase YidC</fullName>
    </recommendedName>
    <alternativeName>
        <fullName evidence="1">Foldase YidC</fullName>
    </alternativeName>
    <alternativeName>
        <fullName evidence="1">Membrane integrase YidC</fullName>
    </alternativeName>
    <alternativeName>
        <fullName evidence="1">Membrane protein YidC</fullName>
    </alternativeName>
</protein>
<keyword id="KW-0997">Cell inner membrane</keyword>
<keyword id="KW-1003">Cell membrane</keyword>
<keyword id="KW-0143">Chaperone</keyword>
<keyword id="KW-0472">Membrane</keyword>
<keyword id="KW-0653">Protein transport</keyword>
<keyword id="KW-1185">Reference proteome</keyword>
<keyword id="KW-0812">Transmembrane</keyword>
<keyword id="KW-1133">Transmembrane helix</keyword>
<keyword id="KW-0813">Transport</keyword>
<feature type="chain" id="PRO_1000070184" description="Membrane protein insertase YidC">
    <location>
        <begin position="1"/>
        <end position="546"/>
    </location>
</feature>
<feature type="transmembrane region" description="Helical" evidence="1">
    <location>
        <begin position="6"/>
        <end position="26"/>
    </location>
</feature>
<feature type="transmembrane region" description="Helical" evidence="1">
    <location>
        <begin position="351"/>
        <end position="371"/>
    </location>
</feature>
<feature type="transmembrane region" description="Helical" evidence="1">
    <location>
        <begin position="425"/>
        <end position="445"/>
    </location>
</feature>
<feature type="transmembrane region" description="Helical" evidence="1">
    <location>
        <begin position="465"/>
        <end position="482"/>
    </location>
</feature>
<feature type="transmembrane region" description="Helical" evidence="1">
    <location>
        <begin position="494"/>
        <end position="514"/>
    </location>
</feature>
<feature type="region of interest" description="Disordered" evidence="2">
    <location>
        <begin position="31"/>
        <end position="56"/>
    </location>
</feature>
<feature type="compositionally biased region" description="Low complexity" evidence="2">
    <location>
        <begin position="37"/>
        <end position="56"/>
    </location>
</feature>
<name>YIDC_THIDA</name>
<sequence length="546" mass="60427">MDNQRLILFIVFSFSLLLLWEAWQDKQAPAPATRPVAGAPAGSAAPTPSTALNAPAAAPAQTGFAKGARAVVETDVLRATIDANGGDLRELQLLGYRETEDKNRVFTLFEDSRTRPYLAQSGFVGGGLPTHRSTFELTPGTYRLTGGAARLEVPLVWNDAARGVRVEKTFIFTRGSHEVAVRTRVVNRGKEPLDLTPYYQFTRHGEAPRGESFFLYTYTGPAFYTDAKKFQKVPFTDIQDGSAEFEKTATNGWVGLVQHHFVAAWLPEESVKREYYARSLGEGLYSAGVILAEGQLAPGQQKTFTVPLYAGPQSQAVLEKAAPGLDLARDYGWLTPLAYPIFWSLEKIERLVGNWGWAIIILTILIKLALYPLSAAGYKSMAKMKKLTPRLQQLKETYGDDRAKLHQAMAEMYKTEKINPLGGCLPILIQIPVFIALYWVLLAAVEMRGAPWLGWITDLTAPDPWYILPIIMGVTSILQVKLNPQPMDPMQAKIMMIMPVAFTVMFVFFPAGLVLYWVVNNILSIAQQWAINKQVEGSGKPAPAKT</sequence>
<dbReference type="EMBL" id="CP000116">
    <property type="protein sequence ID" value="AAZ98778.1"/>
    <property type="molecule type" value="Genomic_DNA"/>
</dbReference>
<dbReference type="RefSeq" id="WP_011313337.1">
    <property type="nucleotide sequence ID" value="NC_007404.1"/>
</dbReference>
<dbReference type="SMR" id="Q3SF38"/>
<dbReference type="STRING" id="292415.Tbd_2825"/>
<dbReference type="KEGG" id="tbd:Tbd_2825"/>
<dbReference type="eggNOG" id="COG0706">
    <property type="taxonomic scope" value="Bacteria"/>
</dbReference>
<dbReference type="HOGENOM" id="CLU_016535_3_0_4"/>
<dbReference type="OrthoDB" id="9780552at2"/>
<dbReference type="Proteomes" id="UP000008291">
    <property type="component" value="Chromosome"/>
</dbReference>
<dbReference type="GO" id="GO:0005886">
    <property type="term" value="C:plasma membrane"/>
    <property type="evidence" value="ECO:0007669"/>
    <property type="project" value="UniProtKB-SubCell"/>
</dbReference>
<dbReference type="GO" id="GO:0032977">
    <property type="term" value="F:membrane insertase activity"/>
    <property type="evidence" value="ECO:0007669"/>
    <property type="project" value="InterPro"/>
</dbReference>
<dbReference type="GO" id="GO:0051205">
    <property type="term" value="P:protein insertion into membrane"/>
    <property type="evidence" value="ECO:0007669"/>
    <property type="project" value="TreeGrafter"/>
</dbReference>
<dbReference type="GO" id="GO:0015031">
    <property type="term" value="P:protein transport"/>
    <property type="evidence" value="ECO:0007669"/>
    <property type="project" value="UniProtKB-KW"/>
</dbReference>
<dbReference type="CDD" id="cd20070">
    <property type="entry name" value="5TM_YidC_Alb3"/>
    <property type="match status" value="1"/>
</dbReference>
<dbReference type="CDD" id="cd19961">
    <property type="entry name" value="EcYidC-like_peri"/>
    <property type="match status" value="1"/>
</dbReference>
<dbReference type="Gene3D" id="2.70.98.90">
    <property type="match status" value="1"/>
</dbReference>
<dbReference type="HAMAP" id="MF_01810">
    <property type="entry name" value="YidC_type1"/>
    <property type="match status" value="1"/>
</dbReference>
<dbReference type="InterPro" id="IPR019998">
    <property type="entry name" value="Membr_insert_YidC"/>
</dbReference>
<dbReference type="InterPro" id="IPR028053">
    <property type="entry name" value="Membr_insert_YidC_N"/>
</dbReference>
<dbReference type="InterPro" id="IPR001708">
    <property type="entry name" value="YidC/ALB3/OXA1/COX18"/>
</dbReference>
<dbReference type="InterPro" id="IPR028055">
    <property type="entry name" value="YidC/Oxa/ALB_C"/>
</dbReference>
<dbReference type="InterPro" id="IPR047196">
    <property type="entry name" value="YidC_ALB_C"/>
</dbReference>
<dbReference type="InterPro" id="IPR038221">
    <property type="entry name" value="YidC_periplasmic_sf"/>
</dbReference>
<dbReference type="NCBIfam" id="NF002352">
    <property type="entry name" value="PRK01318.1-3"/>
    <property type="match status" value="1"/>
</dbReference>
<dbReference type="NCBIfam" id="NF002353">
    <property type="entry name" value="PRK01318.1-4"/>
    <property type="match status" value="1"/>
</dbReference>
<dbReference type="NCBIfam" id="TIGR03593">
    <property type="entry name" value="yidC_nterm"/>
    <property type="match status" value="1"/>
</dbReference>
<dbReference type="NCBIfam" id="TIGR03592">
    <property type="entry name" value="yidC_oxa1_cterm"/>
    <property type="match status" value="1"/>
</dbReference>
<dbReference type="PANTHER" id="PTHR12428:SF65">
    <property type="entry name" value="CYTOCHROME C OXIDASE ASSEMBLY PROTEIN COX18, MITOCHONDRIAL"/>
    <property type="match status" value="1"/>
</dbReference>
<dbReference type="PANTHER" id="PTHR12428">
    <property type="entry name" value="OXA1"/>
    <property type="match status" value="1"/>
</dbReference>
<dbReference type="Pfam" id="PF02096">
    <property type="entry name" value="60KD_IMP"/>
    <property type="match status" value="1"/>
</dbReference>
<dbReference type="Pfam" id="PF14849">
    <property type="entry name" value="YidC_periplas"/>
    <property type="match status" value="1"/>
</dbReference>
<dbReference type="PRINTS" id="PR00701">
    <property type="entry name" value="60KDINNERMP"/>
</dbReference>
<dbReference type="PRINTS" id="PR01900">
    <property type="entry name" value="YIDCPROTEIN"/>
</dbReference>
<reference key="1">
    <citation type="journal article" date="2006" name="J. Bacteriol.">
        <title>The genome sequence of the obligately chemolithoautotrophic, facultatively anaerobic bacterium Thiobacillus denitrificans.</title>
        <authorList>
            <person name="Beller H.R."/>
            <person name="Chain P.S."/>
            <person name="Letain T.E."/>
            <person name="Chakicherla A."/>
            <person name="Larimer F.W."/>
            <person name="Richardson P.M."/>
            <person name="Coleman M.A."/>
            <person name="Wood A.P."/>
            <person name="Kelly D.P."/>
        </authorList>
    </citation>
    <scope>NUCLEOTIDE SEQUENCE [LARGE SCALE GENOMIC DNA]</scope>
    <source>
        <strain>ATCC 25259 / T1</strain>
    </source>
</reference>
<gene>
    <name evidence="1" type="primary">yidC</name>
    <name type="ordered locus">Tbd_2825</name>
</gene>
<comment type="function">
    <text evidence="1">Required for the insertion and/or proper folding and/or complex formation of integral membrane proteins into the membrane. Involved in integration of membrane proteins that insert both dependently and independently of the Sec translocase complex, as well as at least some lipoproteins. Aids folding of multispanning membrane proteins.</text>
</comment>
<comment type="subunit">
    <text evidence="1">Interacts with the Sec translocase complex via SecD. Specifically interacts with transmembrane segments of nascent integral membrane proteins during membrane integration.</text>
</comment>
<comment type="subcellular location">
    <subcellularLocation>
        <location evidence="1">Cell inner membrane</location>
        <topology evidence="1">Multi-pass membrane protein</topology>
    </subcellularLocation>
</comment>
<comment type="similarity">
    <text evidence="1">Belongs to the OXA1/ALB3/YidC family. Type 1 subfamily.</text>
</comment>
<evidence type="ECO:0000255" key="1">
    <source>
        <dbReference type="HAMAP-Rule" id="MF_01810"/>
    </source>
</evidence>
<evidence type="ECO:0000256" key="2">
    <source>
        <dbReference type="SAM" id="MobiDB-lite"/>
    </source>
</evidence>
<organism>
    <name type="scientific">Thiobacillus denitrificans (strain ATCC 25259 / T1)</name>
    <dbReference type="NCBI Taxonomy" id="292415"/>
    <lineage>
        <taxon>Bacteria</taxon>
        <taxon>Pseudomonadati</taxon>
        <taxon>Pseudomonadota</taxon>
        <taxon>Betaproteobacteria</taxon>
        <taxon>Nitrosomonadales</taxon>
        <taxon>Thiobacillaceae</taxon>
        <taxon>Thiobacillus</taxon>
    </lineage>
</organism>
<proteinExistence type="inferred from homology"/>